<keyword id="KW-0067">ATP-binding</keyword>
<keyword id="KW-0997">Cell inner membrane</keyword>
<keyword id="KW-1003">Cell membrane</keyword>
<keyword id="KW-0472">Membrane</keyword>
<keyword id="KW-0547">Nucleotide-binding</keyword>
<keyword id="KW-0764">Sulfate transport</keyword>
<keyword id="KW-1278">Translocase</keyword>
<keyword id="KW-0813">Transport</keyword>
<organism>
    <name type="scientific">Mannheimia succiniciproducens (strain KCTC 0769BP / MBEL55E)</name>
    <dbReference type="NCBI Taxonomy" id="221988"/>
    <lineage>
        <taxon>Bacteria</taxon>
        <taxon>Pseudomonadati</taxon>
        <taxon>Pseudomonadota</taxon>
        <taxon>Gammaproteobacteria</taxon>
        <taxon>Pasteurellales</taxon>
        <taxon>Pasteurellaceae</taxon>
        <taxon>Basfia</taxon>
    </lineage>
</organism>
<reference key="1">
    <citation type="journal article" date="2004" name="Nat. Biotechnol.">
        <title>The genome sequence of the capnophilic rumen bacterium Mannheimia succiniciproducens.</title>
        <authorList>
            <person name="Hong S.H."/>
            <person name="Kim J.S."/>
            <person name="Lee S.Y."/>
            <person name="In Y.H."/>
            <person name="Choi S.S."/>
            <person name="Rih J.-K."/>
            <person name="Kim C.H."/>
            <person name="Jeong H."/>
            <person name="Hur C.G."/>
            <person name="Kim J.J."/>
        </authorList>
    </citation>
    <scope>NUCLEOTIDE SEQUENCE [LARGE SCALE GENOMIC DNA]</scope>
    <source>
        <strain>KCTC 0769BP / MBEL55E</strain>
    </source>
</reference>
<proteinExistence type="inferred from homology"/>
<gene>
    <name evidence="1" type="primary">cysA</name>
    <name type="ordered locus">MS1261</name>
</gene>
<accession>Q65T42</accession>
<protein>
    <recommendedName>
        <fullName evidence="1">Sulfate/thiosulfate import ATP-binding protein CysA</fullName>
        <ecNumber evidence="1">7.3.2.3</ecNumber>
    </recommendedName>
    <alternativeName>
        <fullName evidence="1">Sulfate-transporting ATPase</fullName>
    </alternativeName>
</protein>
<feature type="chain" id="PRO_0000092272" description="Sulfate/thiosulfate import ATP-binding protein CysA">
    <location>
        <begin position="1"/>
        <end position="358"/>
    </location>
</feature>
<feature type="domain" description="ABC transporter" evidence="1">
    <location>
        <begin position="3"/>
        <end position="237"/>
    </location>
</feature>
<feature type="binding site" evidence="1">
    <location>
        <begin position="35"/>
        <end position="42"/>
    </location>
    <ligand>
        <name>ATP</name>
        <dbReference type="ChEBI" id="CHEBI:30616"/>
    </ligand>
</feature>
<evidence type="ECO:0000255" key="1">
    <source>
        <dbReference type="HAMAP-Rule" id="MF_01701"/>
    </source>
</evidence>
<sequence length="358" mass="40445">MSIKIENLEKHFGSFHALKNINLQFKQNQLTALLGPSGCGKTTLLRIIAGLEFADSGKILFEHRDVTDLSAKDRGVGFVFQHYALFQNMTVYDNVAFGLRVKPRKERPSKEEIQQKVTALLKLVKLDWLANAYPNQLSGGQRQRIALARSLAVQPKVLLLDEPFGALDAQVRKELRRWLRDLHQELNVTSIFVTHDQDEALDVSDRIVVMNQGQIEQIDEPNQIYHAPQTPFVTQFVGDVNVFHGHIDEGNLVIGEFSHKIDPATNTTQPVNNQSATAYIRPYELTISRHADNALATGKITHINAIGFIVRIEIESAQSDQPIEVILTKAAYSQSQYKVNEQIYLVPDKLNLFQQMNI</sequence>
<comment type="function">
    <text evidence="1">Part of the ABC transporter complex CysAWTP involved in sulfate/thiosulfate import. Responsible for energy coupling to the transport system.</text>
</comment>
<comment type="catalytic activity">
    <reaction evidence="1">
        <text>sulfate(out) + ATP + H2O = sulfate(in) + ADP + phosphate + H(+)</text>
        <dbReference type="Rhea" id="RHEA:10192"/>
        <dbReference type="ChEBI" id="CHEBI:15377"/>
        <dbReference type="ChEBI" id="CHEBI:15378"/>
        <dbReference type="ChEBI" id="CHEBI:16189"/>
        <dbReference type="ChEBI" id="CHEBI:30616"/>
        <dbReference type="ChEBI" id="CHEBI:43474"/>
        <dbReference type="ChEBI" id="CHEBI:456216"/>
        <dbReference type="EC" id="7.3.2.3"/>
    </reaction>
</comment>
<comment type="catalytic activity">
    <reaction evidence="1">
        <text>thiosulfate(out) + ATP + H2O = thiosulfate(in) + ADP + phosphate + H(+)</text>
        <dbReference type="Rhea" id="RHEA:29871"/>
        <dbReference type="ChEBI" id="CHEBI:15377"/>
        <dbReference type="ChEBI" id="CHEBI:15378"/>
        <dbReference type="ChEBI" id="CHEBI:30616"/>
        <dbReference type="ChEBI" id="CHEBI:33542"/>
        <dbReference type="ChEBI" id="CHEBI:43474"/>
        <dbReference type="ChEBI" id="CHEBI:456216"/>
        <dbReference type="EC" id="7.3.2.3"/>
    </reaction>
</comment>
<comment type="subunit">
    <text evidence="1">The complex is composed of two ATP-binding proteins (CysA), two transmembrane proteins (CysT and CysW) and a solute-binding protein (CysP).</text>
</comment>
<comment type="subcellular location">
    <subcellularLocation>
        <location evidence="1">Cell inner membrane</location>
        <topology evidence="1">Peripheral membrane protein</topology>
    </subcellularLocation>
</comment>
<comment type="similarity">
    <text evidence="1">Belongs to the ABC transporter superfamily. Sulfate/tungstate importer (TC 3.A.1.6) family.</text>
</comment>
<name>CYSA_MANSM</name>
<dbReference type="EC" id="7.3.2.3" evidence="1"/>
<dbReference type="EMBL" id="AE016827">
    <property type="protein sequence ID" value="AAU37868.1"/>
    <property type="molecule type" value="Genomic_DNA"/>
</dbReference>
<dbReference type="RefSeq" id="WP_011200435.1">
    <property type="nucleotide sequence ID" value="NC_006300.1"/>
</dbReference>
<dbReference type="SMR" id="Q65T42"/>
<dbReference type="STRING" id="221988.MS1261"/>
<dbReference type="KEGG" id="msu:MS1261"/>
<dbReference type="eggNOG" id="COG1118">
    <property type="taxonomic scope" value="Bacteria"/>
</dbReference>
<dbReference type="HOGENOM" id="CLU_000604_1_1_6"/>
<dbReference type="OrthoDB" id="9802264at2"/>
<dbReference type="Proteomes" id="UP000000607">
    <property type="component" value="Chromosome"/>
</dbReference>
<dbReference type="GO" id="GO:0043190">
    <property type="term" value="C:ATP-binding cassette (ABC) transporter complex"/>
    <property type="evidence" value="ECO:0007669"/>
    <property type="project" value="InterPro"/>
</dbReference>
<dbReference type="GO" id="GO:0015419">
    <property type="term" value="F:ABC-type sulfate transporter activity"/>
    <property type="evidence" value="ECO:0007669"/>
    <property type="project" value="InterPro"/>
</dbReference>
<dbReference type="GO" id="GO:0102025">
    <property type="term" value="F:ABC-type thiosulfate transporter activity"/>
    <property type="evidence" value="ECO:0007669"/>
    <property type="project" value="RHEA"/>
</dbReference>
<dbReference type="GO" id="GO:0005524">
    <property type="term" value="F:ATP binding"/>
    <property type="evidence" value="ECO:0007669"/>
    <property type="project" value="UniProtKB-KW"/>
</dbReference>
<dbReference type="GO" id="GO:0016887">
    <property type="term" value="F:ATP hydrolysis activity"/>
    <property type="evidence" value="ECO:0007669"/>
    <property type="project" value="InterPro"/>
</dbReference>
<dbReference type="CDD" id="cd03296">
    <property type="entry name" value="ABC_CysA_sulfate_importer"/>
    <property type="match status" value="1"/>
</dbReference>
<dbReference type="FunFam" id="3.40.50.300:FF:000227">
    <property type="entry name" value="Sulfate/thiosulfate import ATP-binding protein CysA"/>
    <property type="match status" value="1"/>
</dbReference>
<dbReference type="Gene3D" id="3.40.50.300">
    <property type="entry name" value="P-loop containing nucleotide triphosphate hydrolases"/>
    <property type="match status" value="1"/>
</dbReference>
<dbReference type="InterPro" id="IPR003593">
    <property type="entry name" value="AAA+_ATPase"/>
</dbReference>
<dbReference type="InterPro" id="IPR050093">
    <property type="entry name" value="ABC_SmlMolc_Importer"/>
</dbReference>
<dbReference type="InterPro" id="IPR003439">
    <property type="entry name" value="ABC_transporter-like_ATP-bd"/>
</dbReference>
<dbReference type="InterPro" id="IPR017871">
    <property type="entry name" value="ABC_transporter-like_CS"/>
</dbReference>
<dbReference type="InterPro" id="IPR041193">
    <property type="entry name" value="CysA_C"/>
</dbReference>
<dbReference type="InterPro" id="IPR008995">
    <property type="entry name" value="Mo/tungstate-bd_C_term_dom"/>
</dbReference>
<dbReference type="InterPro" id="IPR027417">
    <property type="entry name" value="P-loop_NTPase"/>
</dbReference>
<dbReference type="InterPro" id="IPR005666">
    <property type="entry name" value="Sulph_transpt1"/>
</dbReference>
<dbReference type="InterPro" id="IPR024765">
    <property type="entry name" value="TOBE-like"/>
</dbReference>
<dbReference type="NCBIfam" id="TIGR00968">
    <property type="entry name" value="3a0106s01"/>
    <property type="match status" value="1"/>
</dbReference>
<dbReference type="PANTHER" id="PTHR42781">
    <property type="entry name" value="SPERMIDINE/PUTRESCINE IMPORT ATP-BINDING PROTEIN POTA"/>
    <property type="match status" value="1"/>
</dbReference>
<dbReference type="PANTHER" id="PTHR42781:SF4">
    <property type="entry name" value="SPERMIDINE_PUTRESCINE IMPORT ATP-BINDING PROTEIN POTA"/>
    <property type="match status" value="1"/>
</dbReference>
<dbReference type="Pfam" id="PF00005">
    <property type="entry name" value="ABC_tran"/>
    <property type="match status" value="1"/>
</dbReference>
<dbReference type="Pfam" id="PF17850">
    <property type="entry name" value="CysA_C_terminal"/>
    <property type="match status" value="1"/>
</dbReference>
<dbReference type="Pfam" id="PF12857">
    <property type="entry name" value="TOBE_3"/>
    <property type="match status" value="1"/>
</dbReference>
<dbReference type="SMART" id="SM00382">
    <property type="entry name" value="AAA"/>
    <property type="match status" value="1"/>
</dbReference>
<dbReference type="SUPFAM" id="SSF50331">
    <property type="entry name" value="MOP-like"/>
    <property type="match status" value="1"/>
</dbReference>
<dbReference type="SUPFAM" id="SSF52540">
    <property type="entry name" value="P-loop containing nucleoside triphosphate hydrolases"/>
    <property type="match status" value="1"/>
</dbReference>
<dbReference type="PROSITE" id="PS00211">
    <property type="entry name" value="ABC_TRANSPORTER_1"/>
    <property type="match status" value="1"/>
</dbReference>
<dbReference type="PROSITE" id="PS50893">
    <property type="entry name" value="ABC_TRANSPORTER_2"/>
    <property type="match status" value="1"/>
</dbReference>
<dbReference type="PROSITE" id="PS51237">
    <property type="entry name" value="CYSA"/>
    <property type="match status" value="1"/>
</dbReference>